<proteinExistence type="evidence at protein level"/>
<dbReference type="EC" id="3.4.21.81"/>
<dbReference type="EMBL" id="M17104">
    <property type="protein sequence ID" value="AAA26819.1"/>
    <property type="molecule type" value="Genomic_DNA"/>
</dbReference>
<dbReference type="PIR" id="B26974">
    <property type="entry name" value="PRSMBG"/>
</dbReference>
<dbReference type="RefSeq" id="WP_003970068.1">
    <property type="nucleotide sequence ID" value="NZ_UAVD01000020.1"/>
</dbReference>
<dbReference type="PDB" id="1CSO">
    <property type="method" value="X-ray"/>
    <property type="resolution" value="1.90 A"/>
    <property type="chains" value="E=115-299"/>
</dbReference>
<dbReference type="PDB" id="1CT0">
    <property type="method" value="X-ray"/>
    <property type="resolution" value="1.80 A"/>
    <property type="chains" value="E=115-299"/>
</dbReference>
<dbReference type="PDB" id="1CT2">
    <property type="method" value="X-ray"/>
    <property type="resolution" value="1.65 A"/>
    <property type="chains" value="E=115-299"/>
</dbReference>
<dbReference type="PDB" id="1CT4">
    <property type="method" value="X-ray"/>
    <property type="resolution" value="1.60 A"/>
    <property type="chains" value="E=115-299"/>
</dbReference>
<dbReference type="PDB" id="1DS2">
    <property type="method" value="X-ray"/>
    <property type="resolution" value="1.70 A"/>
    <property type="chains" value="E=115-299"/>
</dbReference>
<dbReference type="PDB" id="1SGD">
    <property type="method" value="X-ray"/>
    <property type="resolution" value="1.80 A"/>
    <property type="chains" value="E=115-299"/>
</dbReference>
<dbReference type="PDB" id="1SGE">
    <property type="method" value="X-ray"/>
    <property type="resolution" value="1.80 A"/>
    <property type="chains" value="E=115-299"/>
</dbReference>
<dbReference type="PDB" id="1SGN">
    <property type="method" value="X-ray"/>
    <property type="resolution" value="1.80 A"/>
    <property type="chains" value="E=115-299"/>
</dbReference>
<dbReference type="PDB" id="1SGP">
    <property type="method" value="X-ray"/>
    <property type="resolution" value="1.40 A"/>
    <property type="chains" value="E=115-299"/>
</dbReference>
<dbReference type="PDB" id="1SGQ">
    <property type="method" value="X-ray"/>
    <property type="resolution" value="1.90 A"/>
    <property type="chains" value="E=115-299"/>
</dbReference>
<dbReference type="PDB" id="1SGR">
    <property type="method" value="X-ray"/>
    <property type="resolution" value="1.80 A"/>
    <property type="chains" value="E=115-299"/>
</dbReference>
<dbReference type="PDB" id="1SGY">
    <property type="method" value="X-ray"/>
    <property type="resolution" value="1.80 A"/>
    <property type="chains" value="E=115-299"/>
</dbReference>
<dbReference type="PDB" id="2GKV">
    <property type="method" value="X-ray"/>
    <property type="resolution" value="1.70 A"/>
    <property type="chains" value="E=115-299"/>
</dbReference>
<dbReference type="PDB" id="2NU0">
    <property type="method" value="X-ray"/>
    <property type="resolution" value="1.95 A"/>
    <property type="chains" value="E=115-299"/>
</dbReference>
<dbReference type="PDB" id="2NU1">
    <property type="method" value="X-ray"/>
    <property type="resolution" value="1.80 A"/>
    <property type="chains" value="E=115-299"/>
</dbReference>
<dbReference type="PDB" id="2NU2">
    <property type="method" value="X-ray"/>
    <property type="resolution" value="1.65 A"/>
    <property type="chains" value="E=115-299"/>
</dbReference>
<dbReference type="PDB" id="2NU3">
    <property type="method" value="X-ray"/>
    <property type="resolution" value="1.80 A"/>
    <property type="chains" value="E=115-299"/>
</dbReference>
<dbReference type="PDB" id="2NU4">
    <property type="method" value="X-ray"/>
    <property type="resolution" value="1.75 A"/>
    <property type="chains" value="E=115-299"/>
</dbReference>
<dbReference type="PDB" id="2QA9">
    <property type="method" value="X-ray"/>
    <property type="resolution" value="1.18 A"/>
    <property type="chains" value="E=115-299"/>
</dbReference>
<dbReference type="PDB" id="2QAA">
    <property type="method" value="X-ray"/>
    <property type="resolution" value="1.23 A"/>
    <property type="chains" value="A/B=115-299"/>
</dbReference>
<dbReference type="PDB" id="2SGD">
    <property type="method" value="X-ray"/>
    <property type="resolution" value="1.80 A"/>
    <property type="chains" value="E=115-299"/>
</dbReference>
<dbReference type="PDB" id="2SGE">
    <property type="method" value="X-ray"/>
    <property type="resolution" value="1.80 A"/>
    <property type="chains" value="E=115-299"/>
</dbReference>
<dbReference type="PDB" id="2SGF">
    <property type="method" value="X-ray"/>
    <property type="resolution" value="1.75 A"/>
    <property type="chains" value="E=115-299"/>
</dbReference>
<dbReference type="PDB" id="2SGP">
    <property type="method" value="X-ray"/>
    <property type="resolution" value="1.80 A"/>
    <property type="chains" value="E=115-299"/>
</dbReference>
<dbReference type="PDB" id="2SGQ">
    <property type="method" value="X-ray"/>
    <property type="resolution" value="1.80 A"/>
    <property type="chains" value="E=115-299"/>
</dbReference>
<dbReference type="PDB" id="3SGB">
    <property type="method" value="X-ray"/>
    <property type="resolution" value="1.80 A"/>
    <property type="chains" value="E=115-299"/>
</dbReference>
<dbReference type="PDB" id="3SGQ">
    <property type="method" value="X-ray"/>
    <property type="resolution" value="1.80 A"/>
    <property type="chains" value="E=115-299"/>
</dbReference>
<dbReference type="PDB" id="4SGB">
    <property type="method" value="X-ray"/>
    <property type="resolution" value="2.10 A"/>
    <property type="chains" value="E=115-299"/>
</dbReference>
<dbReference type="PDBsum" id="1CSO"/>
<dbReference type="PDBsum" id="1CT0"/>
<dbReference type="PDBsum" id="1CT2"/>
<dbReference type="PDBsum" id="1CT4"/>
<dbReference type="PDBsum" id="1DS2"/>
<dbReference type="PDBsum" id="1SGD"/>
<dbReference type="PDBsum" id="1SGE"/>
<dbReference type="PDBsum" id="1SGN"/>
<dbReference type="PDBsum" id="1SGP"/>
<dbReference type="PDBsum" id="1SGQ"/>
<dbReference type="PDBsum" id="1SGR"/>
<dbReference type="PDBsum" id="1SGY"/>
<dbReference type="PDBsum" id="2GKV"/>
<dbReference type="PDBsum" id="2NU0"/>
<dbReference type="PDBsum" id="2NU1"/>
<dbReference type="PDBsum" id="2NU2"/>
<dbReference type="PDBsum" id="2NU3"/>
<dbReference type="PDBsum" id="2NU4"/>
<dbReference type="PDBsum" id="2QA9"/>
<dbReference type="PDBsum" id="2QAA"/>
<dbReference type="PDBsum" id="2SGD"/>
<dbReference type="PDBsum" id="2SGE"/>
<dbReference type="PDBsum" id="2SGF"/>
<dbReference type="PDBsum" id="2SGP"/>
<dbReference type="PDBsum" id="2SGQ"/>
<dbReference type="PDBsum" id="3SGB"/>
<dbReference type="PDBsum" id="3SGQ"/>
<dbReference type="PDBsum" id="4SGB"/>
<dbReference type="SMR" id="P00777"/>
<dbReference type="MINT" id="P00777"/>
<dbReference type="Allergome" id="3640">
    <property type="allergen name" value="Str g Pronase"/>
</dbReference>
<dbReference type="MEROPS" id="S01.262"/>
<dbReference type="OMA" id="IYASSWR"/>
<dbReference type="OrthoDB" id="8781117at2"/>
<dbReference type="BRENDA" id="3.4.21.81">
    <property type="organism ID" value="6035"/>
</dbReference>
<dbReference type="EvolutionaryTrace" id="P00777"/>
<dbReference type="GO" id="GO:0005576">
    <property type="term" value="C:extracellular region"/>
    <property type="evidence" value="ECO:0007669"/>
    <property type="project" value="InterPro"/>
</dbReference>
<dbReference type="GO" id="GO:0004252">
    <property type="term" value="F:serine-type endopeptidase activity"/>
    <property type="evidence" value="ECO:0007669"/>
    <property type="project" value="InterPro"/>
</dbReference>
<dbReference type="GO" id="GO:0006508">
    <property type="term" value="P:proteolysis"/>
    <property type="evidence" value="ECO:0007669"/>
    <property type="project" value="UniProtKB-KW"/>
</dbReference>
<dbReference type="CDD" id="cd21112">
    <property type="entry name" value="alphaLP-like"/>
    <property type="match status" value="1"/>
</dbReference>
<dbReference type="Gene3D" id="2.40.10.10">
    <property type="entry name" value="Trypsin-like serine proteases"/>
    <property type="match status" value="2"/>
</dbReference>
<dbReference type="InterPro" id="IPR004236">
    <property type="entry name" value="Pept_S1_alpha_lytic"/>
</dbReference>
<dbReference type="InterPro" id="IPR001316">
    <property type="entry name" value="Pept_S1A_streptogrisin"/>
</dbReference>
<dbReference type="InterPro" id="IPR009003">
    <property type="entry name" value="Peptidase_S1_PA"/>
</dbReference>
<dbReference type="InterPro" id="IPR043504">
    <property type="entry name" value="Peptidase_S1_PA_chymotrypsin"/>
</dbReference>
<dbReference type="InterPro" id="IPR001254">
    <property type="entry name" value="Trypsin_dom"/>
</dbReference>
<dbReference type="InterPro" id="IPR018114">
    <property type="entry name" value="TRYPSIN_HIS"/>
</dbReference>
<dbReference type="InterPro" id="IPR033116">
    <property type="entry name" value="TRYPSIN_SER"/>
</dbReference>
<dbReference type="Pfam" id="PF02983">
    <property type="entry name" value="Pro_Al_protease"/>
    <property type="match status" value="1"/>
</dbReference>
<dbReference type="Pfam" id="PF00089">
    <property type="entry name" value="Trypsin"/>
    <property type="match status" value="1"/>
</dbReference>
<dbReference type="PIRSF" id="PIRSF001134">
    <property type="entry name" value="Streptogrisin"/>
    <property type="match status" value="1"/>
</dbReference>
<dbReference type="PRINTS" id="PR00861">
    <property type="entry name" value="ALYTICPTASE"/>
</dbReference>
<dbReference type="SUPFAM" id="SSF50494">
    <property type="entry name" value="Trypsin-like serine proteases"/>
    <property type="match status" value="1"/>
</dbReference>
<dbReference type="PROSITE" id="PS00134">
    <property type="entry name" value="TRYPSIN_HIS"/>
    <property type="match status" value="1"/>
</dbReference>
<dbReference type="PROSITE" id="PS00135">
    <property type="entry name" value="TRYPSIN_SER"/>
    <property type="match status" value="1"/>
</dbReference>
<gene>
    <name type="primary">sprB</name>
</gene>
<reference key="1">
    <citation type="journal article" date="1987" name="J. Bacteriol.">
        <title>Characterization and structure of genes for proteases A and B from Streptomyces griseus.</title>
        <authorList>
            <person name="Henderson G."/>
            <person name="Krygsman P."/>
            <person name="Liu C.J."/>
            <person name="Davey C.C."/>
            <person name="Malek L.T."/>
        </authorList>
    </citation>
    <scope>NUCLEOTIDE SEQUENCE [GENOMIC DNA]</scope>
</reference>
<reference key="2">
    <citation type="journal article" date="1974" name="Biochem. Biophys. Res. Commun.">
        <title>Amino acid sequence of Streptomyces griseus protease B, A MAJOR COMPONENT OF Pronase.</title>
        <authorList>
            <person name="Jurasek L."/>
            <person name="Carpenter M.R."/>
            <person name="Smillie L.B."/>
            <person name="Gertler A."/>
            <person name="Levy S."/>
            <person name="Ericsson L.H."/>
        </authorList>
    </citation>
    <scope>PROTEIN SEQUENCE OF 115-299</scope>
    <source>
        <strain>K-1</strain>
    </source>
</reference>
<reference key="3">
    <citation type="journal article" date="1975" name="Nature">
        <title>Tertiary structural differences between microbial serine proteases and pancreatic serine enzymes.</title>
        <authorList>
            <person name="Delbaere L.T.J."/>
            <person name="Hutcheon W.L.B."/>
            <person name="James M.N.G."/>
            <person name="Thiessen W.E."/>
        </authorList>
    </citation>
    <scope>X-RAY CRYSTALLOGRAPHY (2.8 ANGSTROMS)</scope>
    <scope>SEQUENCE REVISION</scope>
</reference>
<reference key="4">
    <citation type="journal article" date="1979" name="Can. J. Biochem.">
        <title>The 2.8-A resolution structure of Streptomyces griseus protease B and its homology with alpha-chymotrypsin and Streptomyces griseus protease A.</title>
        <authorList>
            <person name="Delbaere L.T.J."/>
            <person name="Brayer G.D."/>
            <person name="James M.N.G."/>
        </authorList>
    </citation>
    <scope>X-RAY CRYSTALLOGRAPHY (2.8 ANGSTROMS)</scope>
    <scope>SEQUENCE REVISION</scope>
</reference>
<reference key="5">
    <citation type="journal article" date="1989" name="J. Mol. Biol.">
        <title>Structure of the complex of Streptomyces griseus proteinase B and polypeptide chymotrypsin inhibitor-1 from Russet Burbank potato tubers at 2.1-A resolution.</title>
        <authorList>
            <person name="Greenblatt H.M."/>
            <person name="Ryan C.A."/>
            <person name="James M.N.G."/>
        </authorList>
    </citation>
    <scope>X-RAY CRYSTALLOGRAPHY (2.1 ANGSTROMS)</scope>
</reference>
<reference key="6">
    <citation type="journal article" date="1974" name="FEBS Lett.">
        <title>Inhibition of Streptomyces griseus protease B by peptide chloromethyl ketones: partial mapping of the binding site and identification of the reactive residue.</title>
        <authorList>
            <person name="Gertler A."/>
        </authorList>
    </citation>
    <scope>ACTIVE SITE</scope>
</reference>
<reference key="7">
    <citation type="journal article" date="1968" name="Biochim. Biophys. Acta">
        <title>Studies on Streptomyces griseus protease. II. The amino acid sequence around the reactive serine residue of DFP-sensitive components with esterase activity.</title>
        <authorList>
            <person name="Wahlby S."/>
            <person name="Engstrom L."/>
        </authorList>
    </citation>
    <scope>ACTIVE SITE</scope>
</reference>
<accession>P00777</accession>
<name>PRTB_STRGR</name>
<comment type="function">
    <text>Has a primary specificity for large aliphatic or aromatic amino acids.</text>
</comment>
<comment type="catalytic activity">
    <reaction>
        <text>Hydrolysis of proteins with trypsin-like specificity.</text>
        <dbReference type="EC" id="3.4.21.81"/>
    </reaction>
</comment>
<comment type="subunit">
    <text>Monomer.</text>
</comment>
<comment type="similarity">
    <text evidence="2">Belongs to the peptidase S1 family.</text>
</comment>
<evidence type="ECO:0000269" key="1">
    <source>
    </source>
</evidence>
<evidence type="ECO:0000305" key="2"/>
<evidence type="ECO:0007829" key="3">
    <source>
        <dbReference type="PDB" id="2QA9"/>
    </source>
</evidence>
<evidence type="ECO:0007829" key="4">
    <source>
        <dbReference type="PDB" id="2QAA"/>
    </source>
</evidence>
<evidence type="ECO:0007829" key="5">
    <source>
        <dbReference type="PDB" id="2SGP"/>
    </source>
</evidence>
<protein>
    <recommendedName>
        <fullName>Streptogrisin-B</fullName>
        <ecNumber>3.4.21.81</ecNumber>
    </recommendedName>
    <alternativeName>
        <fullName>Pronase enzyme B</fullName>
    </alternativeName>
    <alternativeName>
        <fullName>SGPB</fullName>
    </alternativeName>
    <alternativeName>
        <fullName>Serine protease B</fullName>
    </alternativeName>
</protein>
<organism>
    <name type="scientific">Streptomyces griseus</name>
    <dbReference type="NCBI Taxonomy" id="1911"/>
    <lineage>
        <taxon>Bacteria</taxon>
        <taxon>Bacillati</taxon>
        <taxon>Actinomycetota</taxon>
        <taxon>Actinomycetes</taxon>
        <taxon>Kitasatosporales</taxon>
        <taxon>Streptomycetaceae</taxon>
        <taxon>Streptomyces</taxon>
    </lineage>
</organism>
<keyword id="KW-0002">3D-structure</keyword>
<keyword id="KW-0903">Direct protein sequencing</keyword>
<keyword id="KW-1015">Disulfide bond</keyword>
<keyword id="KW-0378">Hydrolase</keyword>
<keyword id="KW-0645">Protease</keyword>
<keyword id="KW-0720">Serine protease</keyword>
<keyword id="KW-0732">Signal</keyword>
<keyword id="KW-0865">Zymogen</keyword>
<sequence length="299" mass="30554">MRIKRTSNRSNAARRVRTTAVLAGLAAVAALAVPTANAETPRTFSANQLTAASDAVLGADIAGTAWNIDPQSKRLVVTVDSTVSKAEINQIKKSAGANADALRIERTPGKFTKLISGGDAIYSSTGRCSLGFNVRSGSTYYFLTAGHCTDGATTWWANSARTTVLGTTSGSSFPNNDYGIVRYTNTTIPKDGTVGGQDITSAANATVGMAVTRRGSTTGTHSGSVTALNATVNYGGGDVVYGMIRTNVCAEPGDSGGPLYSGTRAIGLTSGGSGNCSSGGTTFFQPVTEALSAYGVSVY</sequence>
<feature type="signal peptide">
    <location>
        <begin position="1"/>
        <end position="38"/>
    </location>
</feature>
<feature type="propeptide" id="PRO_0000026911" evidence="1">
    <location>
        <begin position="39"/>
        <end position="114"/>
    </location>
</feature>
<feature type="chain" id="PRO_0000026912" description="Streptogrisin-B">
    <location>
        <begin position="115"/>
        <end position="299"/>
    </location>
</feature>
<feature type="active site" description="Charge relay system">
    <location>
        <position position="147"/>
    </location>
</feature>
<feature type="active site" description="Charge relay system">
    <location>
        <position position="177"/>
    </location>
</feature>
<feature type="active site" description="Charge relay system">
    <location>
        <position position="255"/>
    </location>
</feature>
<feature type="disulfide bond">
    <location>
        <begin position="128"/>
        <end position="148"/>
    </location>
</feature>
<feature type="disulfide bond">
    <location>
        <begin position="249"/>
        <end position="276"/>
    </location>
</feature>
<feature type="sequence conflict" description="In Ref. 2; AA sequence." evidence="2" ref="2">
    <original>T</original>
    <variation>TG</variation>
    <location>
        <position position="153"/>
    </location>
</feature>
<feature type="sequence conflict" description="In Ref. 2; AA sequence." evidence="2" ref="2">
    <location>
        <position position="157"/>
    </location>
</feature>
<feature type="sequence conflict" description="In Ref. 2; AA sequence." evidence="2" ref="2">
    <original>A</original>
    <variation>V</variation>
    <location>
        <position position="293"/>
    </location>
</feature>
<feature type="sequence conflict" description="In Ref. 2; AA sequence." evidence="2" ref="2">
    <original>V</original>
    <variation>A</variation>
    <location>
        <position position="296"/>
    </location>
</feature>
<feature type="strand" evidence="3">
    <location>
        <begin position="120"/>
        <end position="122"/>
    </location>
</feature>
<feature type="strand" evidence="3">
    <location>
        <begin position="127"/>
        <end position="129"/>
    </location>
</feature>
<feature type="strand" evidence="3">
    <location>
        <begin position="132"/>
        <end position="136"/>
    </location>
</feature>
<feature type="strand" evidence="3">
    <location>
        <begin position="139"/>
        <end position="144"/>
    </location>
</feature>
<feature type="helix" evidence="3">
    <location>
        <begin position="146"/>
        <end position="149"/>
    </location>
</feature>
<feature type="strand" evidence="3">
    <location>
        <begin position="153"/>
        <end position="158"/>
    </location>
</feature>
<feature type="strand" evidence="3">
    <location>
        <begin position="163"/>
        <end position="172"/>
    </location>
</feature>
<feature type="strand" evidence="3">
    <location>
        <begin position="174"/>
        <end position="176"/>
    </location>
</feature>
<feature type="strand" evidence="3">
    <location>
        <begin position="178"/>
        <end position="183"/>
    </location>
</feature>
<feature type="strand" evidence="3">
    <location>
        <begin position="186"/>
        <end position="188"/>
    </location>
</feature>
<feature type="strand" evidence="4">
    <location>
        <begin position="192"/>
        <end position="194"/>
    </location>
</feature>
<feature type="strand" evidence="3">
    <location>
        <begin position="210"/>
        <end position="215"/>
    </location>
</feature>
<feature type="turn" evidence="3">
    <location>
        <begin position="216"/>
        <end position="218"/>
    </location>
</feature>
<feature type="strand" evidence="3">
    <location>
        <begin position="219"/>
        <end position="233"/>
    </location>
</feature>
<feature type="strand" evidence="5">
    <location>
        <begin position="235"/>
        <end position="237"/>
    </location>
</feature>
<feature type="strand" evidence="3">
    <location>
        <begin position="239"/>
        <end position="247"/>
    </location>
</feature>
<feature type="strand" evidence="3">
    <location>
        <begin position="258"/>
        <end position="261"/>
    </location>
</feature>
<feature type="strand" evidence="3">
    <location>
        <begin position="264"/>
        <end position="275"/>
    </location>
</feature>
<feature type="turn" evidence="3">
    <location>
        <begin position="276"/>
        <end position="278"/>
    </location>
</feature>
<feature type="strand" evidence="3">
    <location>
        <begin position="279"/>
        <end position="286"/>
    </location>
</feature>
<feature type="helix" evidence="3">
    <location>
        <begin position="287"/>
        <end position="294"/>
    </location>
</feature>